<organism>
    <name type="scientific">Ligilactobacillus salivarius (strain UCC118)</name>
    <name type="common">Lactobacillus salivarius</name>
    <dbReference type="NCBI Taxonomy" id="362948"/>
    <lineage>
        <taxon>Bacteria</taxon>
        <taxon>Bacillati</taxon>
        <taxon>Bacillota</taxon>
        <taxon>Bacilli</taxon>
        <taxon>Lactobacillales</taxon>
        <taxon>Lactobacillaceae</taxon>
        <taxon>Ligilactobacillus</taxon>
    </lineage>
</organism>
<accession>Q1WSC7</accession>
<evidence type="ECO:0000255" key="1">
    <source>
        <dbReference type="HAMAP-Rule" id="MF_01469"/>
    </source>
</evidence>
<feature type="chain" id="PRO_0000416751" description="Ribonuclease M5 2">
    <location>
        <begin position="1"/>
        <end position="189"/>
    </location>
</feature>
<feature type="domain" description="Toprim" evidence="1">
    <location>
        <begin position="8"/>
        <end position="91"/>
    </location>
</feature>
<feature type="binding site" evidence="1">
    <location>
        <position position="14"/>
    </location>
    <ligand>
        <name>Mg(2+)</name>
        <dbReference type="ChEBI" id="CHEBI:18420"/>
        <label>1</label>
        <note>catalytic</note>
    </ligand>
</feature>
<feature type="binding site" evidence="1">
    <location>
        <position position="60"/>
    </location>
    <ligand>
        <name>Mg(2+)</name>
        <dbReference type="ChEBI" id="CHEBI:18420"/>
        <label>1</label>
        <note>catalytic</note>
    </ligand>
</feature>
<feature type="binding site" evidence="1">
    <location>
        <position position="60"/>
    </location>
    <ligand>
        <name>Mg(2+)</name>
        <dbReference type="ChEBI" id="CHEBI:18420"/>
        <label>2</label>
    </ligand>
</feature>
<feature type="binding site" evidence="1">
    <location>
        <position position="62"/>
    </location>
    <ligand>
        <name>Mg(2+)</name>
        <dbReference type="ChEBI" id="CHEBI:18420"/>
        <label>2</label>
    </ligand>
</feature>
<reference key="1">
    <citation type="journal article" date="2006" name="Proc. Natl. Acad. Sci. U.S.A.">
        <title>Multireplicon genome architecture of Lactobacillus salivarius.</title>
        <authorList>
            <person name="Claesson M.J."/>
            <person name="Li Y."/>
            <person name="Leahy S."/>
            <person name="Canchaya C."/>
            <person name="van Pijkeren J.P."/>
            <person name="Cerdeno-Tarraga A.M."/>
            <person name="Parkhill J."/>
            <person name="Flynn S."/>
            <person name="O'Sullivan G.C."/>
            <person name="Collins J.K."/>
            <person name="Higgins D."/>
            <person name="Shanahan F."/>
            <person name="Fitzgerald G.F."/>
            <person name="van Sinderen D."/>
            <person name="O'Toole P.W."/>
        </authorList>
    </citation>
    <scope>NUCLEOTIDE SEQUENCE [LARGE SCALE GENOMIC DNA]</scope>
    <source>
        <strain>UCC118</strain>
    </source>
</reference>
<protein>
    <recommendedName>
        <fullName evidence="1">Ribonuclease M5 2</fullName>
        <ecNumber evidence="1">3.1.26.8</ecNumber>
    </recommendedName>
    <alternativeName>
        <fullName evidence="1">RNase M5 2</fullName>
    </alternativeName>
    <alternativeName>
        <fullName evidence="1">Ribosomal RNA terminal maturase M5 2</fullName>
    </alternativeName>
</protein>
<keyword id="KW-0963">Cytoplasm</keyword>
<keyword id="KW-0255">Endonuclease</keyword>
<keyword id="KW-0378">Hydrolase</keyword>
<keyword id="KW-0460">Magnesium</keyword>
<keyword id="KW-0479">Metal-binding</keyword>
<keyword id="KW-0540">Nuclease</keyword>
<keyword id="KW-1185">Reference proteome</keyword>
<keyword id="KW-0690">Ribosome biogenesis</keyword>
<keyword id="KW-0694">RNA-binding</keyword>
<keyword id="KW-0698">rRNA processing</keyword>
<keyword id="KW-0699">rRNA-binding</keyword>
<name>RNM52_LIGS1</name>
<dbReference type="EC" id="3.1.26.8" evidence="1"/>
<dbReference type="EMBL" id="CP000233">
    <property type="protein sequence ID" value="ABE00202.1"/>
    <property type="molecule type" value="Genomic_DNA"/>
</dbReference>
<dbReference type="RefSeq" id="YP_536285.1">
    <property type="nucleotide sequence ID" value="NC_007929.1"/>
</dbReference>
<dbReference type="SMR" id="Q1WSC7"/>
<dbReference type="STRING" id="362948.LSL_1398"/>
<dbReference type="KEGG" id="lsl:LSL_1398"/>
<dbReference type="PATRIC" id="fig|362948.14.peg.1477"/>
<dbReference type="HOGENOM" id="CLU_109405_0_0_9"/>
<dbReference type="OrthoDB" id="9791329at2"/>
<dbReference type="Proteomes" id="UP000006559">
    <property type="component" value="Chromosome"/>
</dbReference>
<dbReference type="GO" id="GO:0005737">
    <property type="term" value="C:cytoplasm"/>
    <property type="evidence" value="ECO:0007669"/>
    <property type="project" value="UniProtKB-SubCell"/>
</dbReference>
<dbReference type="GO" id="GO:0046872">
    <property type="term" value="F:metal ion binding"/>
    <property type="evidence" value="ECO:0007669"/>
    <property type="project" value="UniProtKB-KW"/>
</dbReference>
<dbReference type="GO" id="GO:0043822">
    <property type="term" value="F:ribonuclease M5 activity"/>
    <property type="evidence" value="ECO:0007669"/>
    <property type="project" value="UniProtKB-UniRule"/>
</dbReference>
<dbReference type="GO" id="GO:0019843">
    <property type="term" value="F:rRNA binding"/>
    <property type="evidence" value="ECO:0007669"/>
    <property type="project" value="UniProtKB-KW"/>
</dbReference>
<dbReference type="GO" id="GO:0006364">
    <property type="term" value="P:rRNA processing"/>
    <property type="evidence" value="ECO:0007669"/>
    <property type="project" value="UniProtKB-UniRule"/>
</dbReference>
<dbReference type="CDD" id="cd01027">
    <property type="entry name" value="TOPRIM_RNase_M5_like"/>
    <property type="match status" value="1"/>
</dbReference>
<dbReference type="FunFam" id="3.40.1360.10:FF:000006">
    <property type="entry name" value="Ribonuclease M5"/>
    <property type="match status" value="1"/>
</dbReference>
<dbReference type="Gene3D" id="3.40.1360.10">
    <property type="match status" value="1"/>
</dbReference>
<dbReference type="HAMAP" id="MF_01469">
    <property type="entry name" value="RNase_M5"/>
    <property type="match status" value="1"/>
</dbReference>
<dbReference type="InterPro" id="IPR004466">
    <property type="entry name" value="RNase_M5"/>
</dbReference>
<dbReference type="InterPro" id="IPR025156">
    <property type="entry name" value="RNase_M5_C"/>
</dbReference>
<dbReference type="InterPro" id="IPR006171">
    <property type="entry name" value="TOPRIM_dom"/>
</dbReference>
<dbReference type="InterPro" id="IPR034141">
    <property type="entry name" value="TOPRIM_RNase_M5-like"/>
</dbReference>
<dbReference type="NCBIfam" id="TIGR00334">
    <property type="entry name" value="5S_RNA_mat_M5"/>
    <property type="match status" value="1"/>
</dbReference>
<dbReference type="PANTHER" id="PTHR39156">
    <property type="entry name" value="RIBONUCLEASE M5"/>
    <property type="match status" value="1"/>
</dbReference>
<dbReference type="PANTHER" id="PTHR39156:SF1">
    <property type="entry name" value="RIBONUCLEASE M5"/>
    <property type="match status" value="1"/>
</dbReference>
<dbReference type="Pfam" id="PF13331">
    <property type="entry name" value="DUF4093"/>
    <property type="match status" value="1"/>
</dbReference>
<dbReference type="SUPFAM" id="SSF110455">
    <property type="entry name" value="Toprim domain"/>
    <property type="match status" value="1"/>
</dbReference>
<dbReference type="PROSITE" id="PS50880">
    <property type="entry name" value="TOPRIM"/>
    <property type="match status" value="1"/>
</dbReference>
<proteinExistence type="inferred from homology"/>
<gene>
    <name evidence="1" type="primary">rnmV2</name>
    <name type="ordered locus">LSL_1398</name>
</gene>
<comment type="function">
    <text evidence="1">Required for correct processing of both the 5' and 3' ends of 5S rRNA precursor. Cleaves both sides of a double-stranded region yielding mature 5S rRNA in one step.</text>
</comment>
<comment type="catalytic activity">
    <reaction evidence="1">
        <text>Endonucleolytic cleavage of RNA, removing 21 and 42 nucleotides, respectively, from the 5'- and 3'-termini of a 5S-rRNA precursor.</text>
        <dbReference type="EC" id="3.1.26.8"/>
    </reaction>
</comment>
<comment type="cofactor">
    <cofactor evidence="1">
        <name>Mg(2+)</name>
        <dbReference type="ChEBI" id="CHEBI:18420"/>
    </cofactor>
    <text evidence="1">Binds two Mg(2+) per subunit.</text>
</comment>
<comment type="subcellular location">
    <subcellularLocation>
        <location evidence="1">Cytoplasm</location>
    </subcellularLocation>
</comment>
<comment type="similarity">
    <text evidence="1">Belongs to the ribonuclease M5 family.</text>
</comment>
<sequence>MINRIKISQVIVAEGRDDTTNLKRYFDVETYETRWSAINDQDIERIQRLHELHGVIVFTDPDFNDERIRRMIITVIPTVQHVFLKRDEAVPKSKTKGRSLGIEHASYEDLKTALAQVTEQFKNENEFDISRSDLIRLGFLAGADSRKRREYLGEQLRIGYSNGKQLLKRLELFGVTLAEVKEAMTKYSI</sequence>